<feature type="chain" id="PRO_0000108622" description="Ribosomal RNA small subunit methyltransferase H">
    <location>
        <begin position="1"/>
        <end position="313"/>
    </location>
</feature>
<feature type="binding site" evidence="1">
    <location>
        <begin position="35"/>
        <end position="37"/>
    </location>
    <ligand>
        <name>S-adenosyl-L-methionine</name>
        <dbReference type="ChEBI" id="CHEBI:59789"/>
    </ligand>
</feature>
<feature type="binding site" evidence="1">
    <location>
        <position position="55"/>
    </location>
    <ligand>
        <name>S-adenosyl-L-methionine</name>
        <dbReference type="ChEBI" id="CHEBI:59789"/>
    </ligand>
</feature>
<feature type="binding site" evidence="1">
    <location>
        <position position="79"/>
    </location>
    <ligand>
        <name>S-adenosyl-L-methionine</name>
        <dbReference type="ChEBI" id="CHEBI:59789"/>
    </ligand>
</feature>
<feature type="binding site" evidence="1">
    <location>
        <position position="101"/>
    </location>
    <ligand>
        <name>S-adenosyl-L-methionine</name>
        <dbReference type="ChEBI" id="CHEBI:59789"/>
    </ligand>
</feature>
<feature type="binding site" evidence="1">
    <location>
        <position position="108"/>
    </location>
    <ligand>
        <name>S-adenosyl-L-methionine</name>
        <dbReference type="ChEBI" id="CHEBI:59789"/>
    </ligand>
</feature>
<reference key="1">
    <citation type="journal article" date="2002" name="Proc. Natl. Acad. Sci. U.S.A.">
        <title>Extensive mosaic structure revealed by the complete genome sequence of uropathogenic Escherichia coli.</title>
        <authorList>
            <person name="Welch R.A."/>
            <person name="Burland V."/>
            <person name="Plunkett G. III"/>
            <person name="Redford P."/>
            <person name="Roesch P."/>
            <person name="Rasko D."/>
            <person name="Buckles E.L."/>
            <person name="Liou S.-R."/>
            <person name="Boutin A."/>
            <person name="Hackett J."/>
            <person name="Stroud D."/>
            <person name="Mayhew G.F."/>
            <person name="Rose D.J."/>
            <person name="Zhou S."/>
            <person name="Schwartz D.C."/>
            <person name="Perna N.T."/>
            <person name="Mobley H.L.T."/>
            <person name="Donnenberg M.S."/>
            <person name="Blattner F.R."/>
        </authorList>
    </citation>
    <scope>NUCLEOTIDE SEQUENCE [LARGE SCALE GENOMIC DNA]</scope>
    <source>
        <strain>CFT073 / ATCC 700928 / UPEC</strain>
    </source>
</reference>
<organism>
    <name type="scientific">Escherichia coli O6:H1 (strain CFT073 / ATCC 700928 / UPEC)</name>
    <dbReference type="NCBI Taxonomy" id="199310"/>
    <lineage>
        <taxon>Bacteria</taxon>
        <taxon>Pseudomonadati</taxon>
        <taxon>Pseudomonadota</taxon>
        <taxon>Gammaproteobacteria</taxon>
        <taxon>Enterobacterales</taxon>
        <taxon>Enterobacteriaceae</taxon>
        <taxon>Escherichia</taxon>
    </lineage>
</organism>
<comment type="function">
    <text evidence="1">Specifically methylates the N4 position of cytidine in position 1402 (C1402) of 16S rRNA.</text>
</comment>
<comment type="catalytic activity">
    <reaction evidence="1">
        <text>cytidine(1402) in 16S rRNA + S-adenosyl-L-methionine = N(4)-methylcytidine(1402) in 16S rRNA + S-adenosyl-L-homocysteine + H(+)</text>
        <dbReference type="Rhea" id="RHEA:42928"/>
        <dbReference type="Rhea" id="RHEA-COMP:10286"/>
        <dbReference type="Rhea" id="RHEA-COMP:10287"/>
        <dbReference type="ChEBI" id="CHEBI:15378"/>
        <dbReference type="ChEBI" id="CHEBI:57856"/>
        <dbReference type="ChEBI" id="CHEBI:59789"/>
        <dbReference type="ChEBI" id="CHEBI:74506"/>
        <dbReference type="ChEBI" id="CHEBI:82748"/>
        <dbReference type="EC" id="2.1.1.199"/>
    </reaction>
</comment>
<comment type="subcellular location">
    <subcellularLocation>
        <location evidence="1">Cytoplasm</location>
    </subcellularLocation>
</comment>
<comment type="similarity">
    <text evidence="1">Belongs to the methyltransferase superfamily. RsmH family.</text>
</comment>
<dbReference type="EC" id="2.1.1.199" evidence="1"/>
<dbReference type="EMBL" id="AE014075">
    <property type="protein sequence ID" value="AAN78598.1"/>
    <property type="molecule type" value="Genomic_DNA"/>
</dbReference>
<dbReference type="RefSeq" id="WP_000970461.1">
    <property type="nucleotide sequence ID" value="NZ_CP051263.1"/>
</dbReference>
<dbReference type="SMR" id="Q8FL68"/>
<dbReference type="STRING" id="199310.c0100"/>
<dbReference type="KEGG" id="ecc:c0100"/>
<dbReference type="eggNOG" id="COG0275">
    <property type="taxonomic scope" value="Bacteria"/>
</dbReference>
<dbReference type="HOGENOM" id="CLU_038422_2_0_6"/>
<dbReference type="BioCyc" id="ECOL199310:C0100-MONOMER"/>
<dbReference type="Proteomes" id="UP000001410">
    <property type="component" value="Chromosome"/>
</dbReference>
<dbReference type="GO" id="GO:0005737">
    <property type="term" value="C:cytoplasm"/>
    <property type="evidence" value="ECO:0007669"/>
    <property type="project" value="UniProtKB-SubCell"/>
</dbReference>
<dbReference type="GO" id="GO:0071424">
    <property type="term" value="F:rRNA (cytosine-N4-)-methyltransferase activity"/>
    <property type="evidence" value="ECO:0007669"/>
    <property type="project" value="UniProtKB-UniRule"/>
</dbReference>
<dbReference type="GO" id="GO:0070475">
    <property type="term" value="P:rRNA base methylation"/>
    <property type="evidence" value="ECO:0007669"/>
    <property type="project" value="UniProtKB-UniRule"/>
</dbReference>
<dbReference type="FunFam" id="1.10.150.170:FF:000001">
    <property type="entry name" value="Ribosomal RNA small subunit methyltransferase H"/>
    <property type="match status" value="1"/>
</dbReference>
<dbReference type="Gene3D" id="1.10.150.170">
    <property type="entry name" value="Putative methyltransferase TM0872, insert domain"/>
    <property type="match status" value="1"/>
</dbReference>
<dbReference type="Gene3D" id="3.40.50.150">
    <property type="entry name" value="Vaccinia Virus protein VP39"/>
    <property type="match status" value="1"/>
</dbReference>
<dbReference type="HAMAP" id="MF_01007">
    <property type="entry name" value="16SrRNA_methyltr_H"/>
    <property type="match status" value="1"/>
</dbReference>
<dbReference type="InterPro" id="IPR002903">
    <property type="entry name" value="RsmH"/>
</dbReference>
<dbReference type="InterPro" id="IPR023397">
    <property type="entry name" value="SAM-dep_MeTrfase_MraW_recog"/>
</dbReference>
<dbReference type="InterPro" id="IPR029063">
    <property type="entry name" value="SAM-dependent_MTases_sf"/>
</dbReference>
<dbReference type="NCBIfam" id="TIGR00006">
    <property type="entry name" value="16S rRNA (cytosine(1402)-N(4))-methyltransferase RsmH"/>
    <property type="match status" value="1"/>
</dbReference>
<dbReference type="PANTHER" id="PTHR11265:SF0">
    <property type="entry name" value="12S RRNA N4-METHYLCYTIDINE METHYLTRANSFERASE"/>
    <property type="match status" value="1"/>
</dbReference>
<dbReference type="PANTHER" id="PTHR11265">
    <property type="entry name" value="S-ADENOSYL-METHYLTRANSFERASE MRAW"/>
    <property type="match status" value="1"/>
</dbReference>
<dbReference type="Pfam" id="PF01795">
    <property type="entry name" value="Methyltransf_5"/>
    <property type="match status" value="1"/>
</dbReference>
<dbReference type="PIRSF" id="PIRSF004486">
    <property type="entry name" value="MraW"/>
    <property type="match status" value="1"/>
</dbReference>
<dbReference type="SUPFAM" id="SSF81799">
    <property type="entry name" value="Putative methyltransferase TM0872, insert domain"/>
    <property type="match status" value="1"/>
</dbReference>
<dbReference type="SUPFAM" id="SSF53335">
    <property type="entry name" value="S-adenosyl-L-methionine-dependent methyltransferases"/>
    <property type="match status" value="1"/>
</dbReference>
<gene>
    <name evidence="1" type="primary">rsmH</name>
    <name type="synonym">mraW</name>
    <name type="ordered locus">c0100</name>
</gene>
<protein>
    <recommendedName>
        <fullName evidence="1">Ribosomal RNA small subunit methyltransferase H</fullName>
        <ecNumber evidence="1">2.1.1.199</ecNumber>
    </recommendedName>
    <alternativeName>
        <fullName evidence="1">16S rRNA m(4)C1402 methyltransferase</fullName>
    </alternativeName>
    <alternativeName>
        <fullName evidence="1">rRNA (cytosine-N(4)-)-methyltransferase RsmH</fullName>
    </alternativeName>
</protein>
<proteinExistence type="inferred from homology"/>
<sequence>MMENYKHFTVLLDEAVNGLNIRPDGIYIDGTFGRGGHSRLILSQLGEEGRLLAIDRDPQAIAVAKTIDDPRFSIIHGPFSALGEYVADRDLIGKIDGILLDLGVSSPQLDDAERGFSFMRDGPLDMRMDPTRGQSAAEWLQTAEEADIAWVLKTYGEERFAKRIARAIVEHNREQPMTRTKELAEVVAAATPVKDKFKHPATRTFQAVRIWVNSELEEIEQALKSSLHVLAPGGRLSIISFHSLEDRIVKRFMRENSRGPQVPAGLPMTEEQLKKLGGRQLRALGKLMPGEEEVAENPRARSSVLRIAERTNA</sequence>
<keyword id="KW-0963">Cytoplasm</keyword>
<keyword id="KW-0489">Methyltransferase</keyword>
<keyword id="KW-1185">Reference proteome</keyword>
<keyword id="KW-0698">rRNA processing</keyword>
<keyword id="KW-0949">S-adenosyl-L-methionine</keyword>
<keyword id="KW-0808">Transferase</keyword>
<evidence type="ECO:0000255" key="1">
    <source>
        <dbReference type="HAMAP-Rule" id="MF_01007"/>
    </source>
</evidence>
<accession>Q8FL68</accession>
<name>RSMH_ECOL6</name>